<protein>
    <recommendedName>
        <fullName evidence="5">Zinc finger protein OBI1</fullName>
    </recommendedName>
    <alternativeName>
        <fullName evidence="4">Osteoblast inducer-1</fullName>
        <shortName evidence="4">ObI-1</shortName>
    </alternativeName>
</protein>
<name>ZFOI1_MOUSE</name>
<organism>
    <name type="scientific">Mus musculus</name>
    <name type="common">Mouse</name>
    <dbReference type="NCBI Taxonomy" id="10090"/>
    <lineage>
        <taxon>Eukaryota</taxon>
        <taxon>Metazoa</taxon>
        <taxon>Chordata</taxon>
        <taxon>Craniata</taxon>
        <taxon>Vertebrata</taxon>
        <taxon>Euteleostomi</taxon>
        <taxon>Mammalia</taxon>
        <taxon>Eutheria</taxon>
        <taxon>Euarchontoglires</taxon>
        <taxon>Glires</taxon>
        <taxon>Rodentia</taxon>
        <taxon>Myomorpha</taxon>
        <taxon>Muroidea</taxon>
        <taxon>Muridae</taxon>
        <taxon>Murinae</taxon>
        <taxon>Mus</taxon>
        <taxon>Mus</taxon>
    </lineage>
</organism>
<comment type="function">
    <text evidence="3">May modulate osteogenic differentiation, at least in part, through the bone morphogenetic protein (BMP) signaling pathway, increasing RUNX2 activation and leading to osteoblast commitment and maturation.</text>
</comment>
<comment type="subcellular location">
    <subcellularLocation>
        <location evidence="3">Nucleus</location>
    </subcellularLocation>
</comment>
<comment type="tissue specificity">
    <text evidence="3">Expressed during osteogenic differentiation where levels increase from the first days of differentiation and remain high during the whole process (PubMed:30654721). Highly expressed in lung (PubMed:30654721).</text>
</comment>
<comment type="induction">
    <text evidence="3">Up-regulated during osteogenic differentiation.</text>
</comment>
<comment type="PTM">
    <text evidence="3">Polyubiquitinated, leading to its degradation via the ubiquitin-proteasome pathway.</text>
</comment>
<proteinExistence type="evidence at protein level"/>
<reference key="1">
    <citation type="journal article" date="2009" name="PLoS Biol.">
        <title>Lineage-specific biology revealed by a finished genome assembly of the mouse.</title>
        <authorList>
            <person name="Church D.M."/>
            <person name="Goodstadt L."/>
            <person name="Hillier L.W."/>
            <person name="Zody M.C."/>
            <person name="Goldstein S."/>
            <person name="She X."/>
            <person name="Bult C.J."/>
            <person name="Agarwala R."/>
            <person name="Cherry J.L."/>
            <person name="DiCuccio M."/>
            <person name="Hlavina W."/>
            <person name="Kapustin Y."/>
            <person name="Meric P."/>
            <person name="Maglott D."/>
            <person name="Birtle Z."/>
            <person name="Marques A.C."/>
            <person name="Graves T."/>
            <person name="Zhou S."/>
            <person name="Teague B."/>
            <person name="Potamousis K."/>
            <person name="Churas C."/>
            <person name="Place M."/>
            <person name="Herschleb J."/>
            <person name="Runnheim R."/>
            <person name="Forrest D."/>
            <person name="Amos-Landgraf J."/>
            <person name="Schwartz D.C."/>
            <person name="Cheng Z."/>
            <person name="Lindblad-Toh K."/>
            <person name="Eichler E.E."/>
            <person name="Ponting C.P."/>
        </authorList>
    </citation>
    <scope>NUCLEOTIDE SEQUENCE [LARGE SCALE GENOMIC DNA]</scope>
    <source>
        <strain>C57BL/6J</strain>
    </source>
</reference>
<reference key="2">
    <citation type="journal article" date="2019" name="Stem Cells Dev.">
        <title>Identification of a Novel Transcription Factor Required for Osteogenic Differentiation of Mesenchymal Stem Cells.</title>
        <authorList>
            <person name="Querques F."/>
            <person name="D'Agostino A."/>
            <person name="Cozzolino C."/>
            <person name="Cozzuto L."/>
            <person name="Lombardo B."/>
            <person name="Leggiero E."/>
            <person name="Ruosi C."/>
            <person name="Pastore L."/>
        </authorList>
    </citation>
    <scope>TISSUE SPECIFICITY</scope>
    <scope>FUNCTION</scope>
    <scope>INDUCTION</scope>
    <scope>SUBCELLULAR LOCATION</scope>
    <scope>UBIQUITINATION</scope>
</reference>
<keyword id="KW-0479">Metal-binding</keyword>
<keyword id="KW-0539">Nucleus</keyword>
<keyword id="KW-1185">Reference proteome</keyword>
<keyword id="KW-0677">Repeat</keyword>
<keyword id="KW-0832">Ubl conjugation</keyword>
<keyword id="KW-0862">Zinc</keyword>
<keyword id="KW-0863">Zinc-finger</keyword>
<sequence>MVRRRQRLPEVDMGLVSFEDVAVDFTWQEWQELDAAQRTLYRDVMLENYRSLVWLGHCLAKPELISKLEEGFEPWGVAEATEQCLPGVRKWSAPVEKGQQSQEKYLRQVKIIKKNTPDEDKVEVENTYNVDSNCISNMTLKNEVCSRVFFQELVNPLLDVPLPTEAGERQSTEVPHDLNRTQEVLSYPKHFTHHSKDQYSQCCFQYFGPDEAFHTKAILTPEMFYVQETSRTCNNYDKSFDEVTIPAQYMTQLRKQTLGWNICHKIFPNKTELSNHDAMHTGENDDKCDYEKPIINKSLYLTKHQEAHAGIEPQAHKENIKFFCLDAELQTVDPELHGEKQVYECKVSGKTFRHQPEHISQQRPHACERACQAKEHGEAGCDEPALTQHQRLCTEEKACEGKACSKAFHHKSLLPQYQSARADEQQSDCKELMKIYFYVSSPTQHHGPPPPEKPFRCNDCLKTFSHKSQLERHQRMHTGEKPHECKECRKAFCHKSHLIRHQGIHAPEKPYECNECKKSFYLRSQLTLHERTHTGEKPFECKECRKAFSRNSHLTQHQKIHTGEKPHKCKECGNAFARKSHLIQHQKTHTGERPYECKECRKAFSRKSQLMQHETTHTGERAYECKECRKTFYLKAYLTRHQVIHQSEKPFECKKCGKAFSRKSYLTRHQKIHKGQTLSG</sequence>
<gene>
    <name type="primary">ObI1</name>
    <name evidence="6" type="synonym">A430033K04Rik</name>
</gene>
<accession>E9Q8G5</accession>
<dbReference type="EMBL" id="AC125115">
    <property type="status" value="NOT_ANNOTATED_CDS"/>
    <property type="molecule type" value="Genomic_DNA"/>
</dbReference>
<dbReference type="EMBL" id="AC242503">
    <property type="status" value="NOT_ANNOTATED_CDS"/>
    <property type="molecule type" value="Genomic_DNA"/>
</dbReference>
<dbReference type="RefSeq" id="NP_898846.2">
    <property type="nucleotide sequence ID" value="NM_183025.2"/>
</dbReference>
<dbReference type="SMR" id="E9Q8G5"/>
<dbReference type="FunCoup" id="E9Q8G5">
    <property type="interactions" value="85"/>
</dbReference>
<dbReference type="PaxDb" id="10090-ENSMUSP00000067316"/>
<dbReference type="ProteomicsDB" id="355325"/>
<dbReference type="DNASU" id="243308"/>
<dbReference type="Ensembl" id="ENSMUST00000069862.11">
    <property type="protein sequence ID" value="ENSMUSP00000067316.8"/>
    <property type="gene ID" value="ENSMUSG00000056014.17"/>
</dbReference>
<dbReference type="GeneID" id="243308"/>
<dbReference type="KEGG" id="mmu:243308"/>
<dbReference type="UCSC" id="uc009afu.2">
    <property type="organism name" value="mouse"/>
</dbReference>
<dbReference type="AGR" id="MGI:3583896"/>
<dbReference type="MGI" id="MGI:3583896">
    <property type="gene designation" value="A430033K04Rik"/>
</dbReference>
<dbReference type="VEuPathDB" id="HostDB:ENSMUSG00000056014"/>
<dbReference type="eggNOG" id="KOG1721">
    <property type="taxonomic scope" value="Eukaryota"/>
</dbReference>
<dbReference type="GeneTree" id="ENSGT00950000182890"/>
<dbReference type="HOGENOM" id="CLU_002678_44_5_1"/>
<dbReference type="InParanoid" id="E9Q8G5"/>
<dbReference type="OMA" id="HQVIHQS"/>
<dbReference type="OrthoDB" id="6365676at2759"/>
<dbReference type="PhylomeDB" id="E9Q8G5"/>
<dbReference type="TreeFam" id="TF339594"/>
<dbReference type="BioGRID-ORCS" id="243308">
    <property type="hits" value="0 hits in 70 CRISPR screens"/>
</dbReference>
<dbReference type="ChiTaRS" id="A430033K04Rik">
    <property type="organism name" value="mouse"/>
</dbReference>
<dbReference type="PRO" id="PR:E9Q8G5"/>
<dbReference type="Proteomes" id="UP000000589">
    <property type="component" value="Chromosome 5"/>
</dbReference>
<dbReference type="RNAct" id="E9Q8G5">
    <property type="molecule type" value="protein"/>
</dbReference>
<dbReference type="Bgee" id="ENSMUSG00000056014">
    <property type="expression patterns" value="Expressed in animal zygote and 189 other cell types or tissues"/>
</dbReference>
<dbReference type="ExpressionAtlas" id="E9Q8G5">
    <property type="expression patterns" value="baseline and differential"/>
</dbReference>
<dbReference type="GO" id="GO:0005634">
    <property type="term" value="C:nucleus"/>
    <property type="evidence" value="ECO:0000314"/>
    <property type="project" value="UniProtKB"/>
</dbReference>
<dbReference type="GO" id="GO:0008270">
    <property type="term" value="F:zinc ion binding"/>
    <property type="evidence" value="ECO:0007669"/>
    <property type="project" value="UniProtKB-KW"/>
</dbReference>
<dbReference type="GO" id="GO:0045892">
    <property type="term" value="P:negative regulation of DNA-templated transcription"/>
    <property type="evidence" value="ECO:0000314"/>
    <property type="project" value="MGI"/>
</dbReference>
<dbReference type="GO" id="GO:0045667">
    <property type="term" value="P:regulation of osteoblast differentiation"/>
    <property type="evidence" value="ECO:0000315"/>
    <property type="project" value="UniProtKB"/>
</dbReference>
<dbReference type="CDD" id="cd07765">
    <property type="entry name" value="KRAB_A-box"/>
    <property type="match status" value="1"/>
</dbReference>
<dbReference type="FunFam" id="3.30.160.60:FF:000040">
    <property type="entry name" value="RB associated KRAB zinc finger"/>
    <property type="match status" value="1"/>
</dbReference>
<dbReference type="FunFam" id="3.30.160.60:FF:000139">
    <property type="entry name" value="zinc finger protein 1 homolog"/>
    <property type="match status" value="1"/>
</dbReference>
<dbReference type="FunFam" id="3.30.160.60:FF:000295">
    <property type="entry name" value="zinc finger protein 19"/>
    <property type="match status" value="2"/>
</dbReference>
<dbReference type="FunFam" id="3.30.160.60:FF:000352">
    <property type="entry name" value="zinc finger protein 3 homolog"/>
    <property type="match status" value="1"/>
</dbReference>
<dbReference type="FunFam" id="3.30.160.60:FF:001270">
    <property type="entry name" value="zinc finger protein 583 isoform X1"/>
    <property type="match status" value="1"/>
</dbReference>
<dbReference type="FunFam" id="3.30.160.60:FF:000011">
    <property type="entry name" value="zinc finger protein 615 isoform X1"/>
    <property type="match status" value="1"/>
</dbReference>
<dbReference type="FunFam" id="3.30.160.60:FF:001157">
    <property type="entry name" value="Zinc finger protein 793"/>
    <property type="match status" value="1"/>
</dbReference>
<dbReference type="Gene3D" id="6.10.140.140">
    <property type="match status" value="1"/>
</dbReference>
<dbReference type="Gene3D" id="3.30.160.60">
    <property type="entry name" value="Classic Zinc Finger"/>
    <property type="match status" value="9"/>
</dbReference>
<dbReference type="InterPro" id="IPR001909">
    <property type="entry name" value="KRAB"/>
</dbReference>
<dbReference type="InterPro" id="IPR036051">
    <property type="entry name" value="KRAB_dom_sf"/>
</dbReference>
<dbReference type="InterPro" id="IPR050826">
    <property type="entry name" value="Krueppel_C2H2_ZnFinger"/>
</dbReference>
<dbReference type="InterPro" id="IPR036236">
    <property type="entry name" value="Znf_C2H2_sf"/>
</dbReference>
<dbReference type="InterPro" id="IPR013087">
    <property type="entry name" value="Znf_C2H2_type"/>
</dbReference>
<dbReference type="PANTHER" id="PTHR24377">
    <property type="entry name" value="IP01015P-RELATED"/>
    <property type="match status" value="1"/>
</dbReference>
<dbReference type="Pfam" id="PF01352">
    <property type="entry name" value="KRAB"/>
    <property type="match status" value="1"/>
</dbReference>
<dbReference type="Pfam" id="PF00096">
    <property type="entry name" value="zf-C2H2"/>
    <property type="match status" value="8"/>
</dbReference>
<dbReference type="SMART" id="SM00349">
    <property type="entry name" value="KRAB"/>
    <property type="match status" value="1"/>
</dbReference>
<dbReference type="SMART" id="SM00355">
    <property type="entry name" value="ZnF_C2H2"/>
    <property type="match status" value="9"/>
</dbReference>
<dbReference type="SUPFAM" id="SSF57667">
    <property type="entry name" value="beta-beta-alpha zinc fingers"/>
    <property type="match status" value="6"/>
</dbReference>
<dbReference type="SUPFAM" id="SSF109640">
    <property type="entry name" value="KRAB domain (Kruppel-associated box)"/>
    <property type="match status" value="1"/>
</dbReference>
<dbReference type="PROSITE" id="PS50805">
    <property type="entry name" value="KRAB"/>
    <property type="match status" value="1"/>
</dbReference>
<dbReference type="PROSITE" id="PS00028">
    <property type="entry name" value="ZINC_FINGER_C2H2_1"/>
    <property type="match status" value="8"/>
</dbReference>
<dbReference type="PROSITE" id="PS50157">
    <property type="entry name" value="ZINC_FINGER_C2H2_2"/>
    <property type="match status" value="9"/>
</dbReference>
<feature type="chain" id="PRO_0000454385" description="Zinc finger protein OBI1">
    <location>
        <begin position="1"/>
        <end position="680"/>
    </location>
</feature>
<feature type="domain" description="KRAB" evidence="2">
    <location>
        <begin position="16"/>
        <end position="87"/>
    </location>
</feature>
<feature type="zinc finger region" description="C2H2-type 1; degenerate" evidence="1">
    <location>
        <begin position="263"/>
        <end position="280"/>
    </location>
</feature>
<feature type="zinc finger region" description="C2H2-type 2" evidence="1">
    <location>
        <begin position="455"/>
        <end position="477"/>
    </location>
</feature>
<feature type="zinc finger region" description="C2H2-type 3" evidence="1">
    <location>
        <begin position="483"/>
        <end position="505"/>
    </location>
</feature>
<feature type="zinc finger region" description="C2H2-type 4" evidence="1">
    <location>
        <begin position="511"/>
        <end position="533"/>
    </location>
</feature>
<feature type="zinc finger region" description="C2H2-type 5" evidence="1">
    <location>
        <begin position="539"/>
        <end position="561"/>
    </location>
</feature>
<feature type="zinc finger region" description="C2H2-type 6" evidence="1">
    <location>
        <begin position="567"/>
        <end position="589"/>
    </location>
</feature>
<feature type="zinc finger region" description="C2H2-type 7" evidence="1">
    <location>
        <begin position="595"/>
        <end position="617"/>
    </location>
</feature>
<feature type="zinc finger region" description="C2H2-type 8" evidence="1">
    <location>
        <begin position="623"/>
        <end position="645"/>
    </location>
</feature>
<feature type="zinc finger region" description="C2H2-type 9" evidence="1">
    <location>
        <begin position="651"/>
        <end position="673"/>
    </location>
</feature>
<evidence type="ECO:0000255" key="1">
    <source>
        <dbReference type="PROSITE-ProRule" id="PRU00042"/>
    </source>
</evidence>
<evidence type="ECO:0000255" key="2">
    <source>
        <dbReference type="PROSITE-ProRule" id="PRU00119"/>
    </source>
</evidence>
<evidence type="ECO:0000269" key="3">
    <source>
    </source>
</evidence>
<evidence type="ECO:0000303" key="4">
    <source>
    </source>
</evidence>
<evidence type="ECO:0000305" key="5"/>
<evidence type="ECO:0000312" key="6">
    <source>
        <dbReference type="MGI" id="MGI:3583896"/>
    </source>
</evidence>